<organism>
    <name type="scientific">Mycobacterium leprae (strain TN)</name>
    <dbReference type="NCBI Taxonomy" id="272631"/>
    <lineage>
        <taxon>Bacteria</taxon>
        <taxon>Bacillati</taxon>
        <taxon>Actinomycetota</taxon>
        <taxon>Actinomycetes</taxon>
        <taxon>Mycobacteriales</taxon>
        <taxon>Mycobacteriaceae</taxon>
        <taxon>Mycobacterium</taxon>
    </lineage>
</organism>
<gene>
    <name type="ordered locus">ML0091</name>
</gene>
<dbReference type="EMBL" id="M23232">
    <property type="protein sequence ID" value="AAA25345.1"/>
    <property type="molecule type" value="Genomic_DNA"/>
</dbReference>
<dbReference type="EMBL" id="AL583917">
    <property type="protein sequence ID" value="CAC29599.1"/>
    <property type="molecule type" value="Genomic_DNA"/>
</dbReference>
<dbReference type="PIR" id="A30557">
    <property type="entry name" value="A30557"/>
</dbReference>
<dbReference type="RefSeq" id="NP_301189.1">
    <property type="nucleotide sequence ID" value="NC_002677.1"/>
</dbReference>
<dbReference type="RefSeq" id="WP_010907514.1">
    <property type="nucleotide sequence ID" value="NC_002677.1"/>
</dbReference>
<dbReference type="STRING" id="272631.gene:17573903"/>
<dbReference type="KEGG" id="mle:ML0091"/>
<dbReference type="PATRIC" id="fig|272631.5.peg.144"/>
<dbReference type="Leproma" id="ML0091"/>
<dbReference type="eggNOG" id="ENOG50334MW">
    <property type="taxonomic scope" value="Bacteria"/>
</dbReference>
<dbReference type="HOGENOM" id="CLU_063439_0_0_11"/>
<dbReference type="OrthoDB" id="4641740at2"/>
<dbReference type="Proteomes" id="UP000000806">
    <property type="component" value="Chromosome"/>
</dbReference>
<accession>P19361</accession>
<keyword id="KW-1185">Reference proteome</keyword>
<keyword id="KW-0732">Signal</keyword>
<reference key="1">
    <citation type="journal article" date="1988" name="J. Immunol.">
        <title>A 28-kDa protein from Mycobacterium leprae is a target of the human antibody response in lepromatous leprosy.</title>
        <authorList>
            <person name="Cherayil B.J."/>
            <person name="Young R.A."/>
        </authorList>
    </citation>
    <scope>NUCLEOTIDE SEQUENCE [GENOMIC DNA]</scope>
</reference>
<reference key="2">
    <citation type="journal article" date="2001" name="Nature">
        <title>Massive gene decay in the leprosy bacillus.</title>
        <authorList>
            <person name="Cole S.T."/>
            <person name="Eiglmeier K."/>
            <person name="Parkhill J."/>
            <person name="James K.D."/>
            <person name="Thomson N.R."/>
            <person name="Wheeler P.R."/>
            <person name="Honore N."/>
            <person name="Garnier T."/>
            <person name="Churcher C.M."/>
            <person name="Harris D.E."/>
            <person name="Mungall K.L."/>
            <person name="Basham D."/>
            <person name="Brown D."/>
            <person name="Chillingworth T."/>
            <person name="Connor R."/>
            <person name="Davies R.M."/>
            <person name="Devlin K."/>
            <person name="Duthoy S."/>
            <person name="Feltwell T."/>
            <person name="Fraser A."/>
            <person name="Hamlin N."/>
            <person name="Holroyd S."/>
            <person name="Hornsby T."/>
            <person name="Jagels K."/>
            <person name="Lacroix C."/>
            <person name="Maclean J."/>
            <person name="Moule S."/>
            <person name="Murphy L.D."/>
            <person name="Oliver K."/>
            <person name="Quail M.A."/>
            <person name="Rajandream M.A."/>
            <person name="Rutherford K.M."/>
            <person name="Rutter S."/>
            <person name="Seeger K."/>
            <person name="Simon S."/>
            <person name="Simmonds M."/>
            <person name="Skelton J."/>
            <person name="Squares R."/>
            <person name="Squares S."/>
            <person name="Stevens K."/>
            <person name="Taylor K."/>
            <person name="Whitehead S."/>
            <person name="Woodward J.R."/>
            <person name="Barrell B.G."/>
        </authorList>
    </citation>
    <scope>NUCLEOTIDE SEQUENCE [LARGE SCALE GENOMIC DNA]</scope>
    <source>
        <strain>TN</strain>
    </source>
</reference>
<name>28KD_MYCLE</name>
<proteinExistence type="predicted"/>
<comment type="similarity">
    <text evidence="2">To M.tuberculosis ERP.</text>
</comment>
<feature type="signal peptide">
    <location>
        <begin position="1"/>
        <end position="22"/>
    </location>
</feature>
<feature type="chain" id="PRO_0000020574" description="28 kDa antigen">
    <location>
        <begin position="23"/>
        <end position="236"/>
    </location>
</feature>
<feature type="region of interest" description="Disordered" evidence="1">
    <location>
        <begin position="76"/>
        <end position="105"/>
    </location>
</feature>
<feature type="compositionally biased region" description="Polar residues" evidence="1">
    <location>
        <begin position="94"/>
        <end position="105"/>
    </location>
</feature>
<evidence type="ECO:0000256" key="1">
    <source>
        <dbReference type="SAM" id="MobiDB-lite"/>
    </source>
</evidence>
<evidence type="ECO:0000305" key="2"/>
<sequence>MPNRRRCKLSTAISTVATLAIASPCAYFLVYEPTASAKPAAKHYEFKQAASIADLPGEVLDAISQGLSQFGINLPPVPSLTGTDDPGNGLRTPGLTSPDLTNQELGTPVLTAPGTGLTPPVTGSPICTAPDLNLGGTCPSEVPITTPISLDPGTDGTYPILGDPSTLGGTSPISTSSGELVNDLLKVANQLGASQVMDLIKGVVMPAVMQGVQNGNVAGDLSGSVTPAAISLIPVT</sequence>
<protein>
    <recommendedName>
        <fullName>28 kDa antigen</fullName>
    </recommendedName>
</protein>